<reference key="1">
    <citation type="journal article" date="1995" name="Science">
        <title>Whole-genome random sequencing and assembly of Haemophilus influenzae Rd.</title>
        <authorList>
            <person name="Fleischmann R.D."/>
            <person name="Adams M.D."/>
            <person name="White O."/>
            <person name="Clayton R.A."/>
            <person name="Kirkness E.F."/>
            <person name="Kerlavage A.R."/>
            <person name="Bult C.J."/>
            <person name="Tomb J.-F."/>
            <person name="Dougherty B.A."/>
            <person name="Merrick J.M."/>
            <person name="McKenney K."/>
            <person name="Sutton G.G."/>
            <person name="FitzHugh W."/>
            <person name="Fields C.A."/>
            <person name="Gocayne J.D."/>
            <person name="Scott J.D."/>
            <person name="Shirley R."/>
            <person name="Liu L.-I."/>
            <person name="Glodek A."/>
            <person name="Kelley J.M."/>
            <person name="Weidman J.F."/>
            <person name="Phillips C.A."/>
            <person name="Spriggs T."/>
            <person name="Hedblom E."/>
            <person name="Cotton M.D."/>
            <person name="Utterback T.R."/>
            <person name="Hanna M.C."/>
            <person name="Nguyen D.T."/>
            <person name="Saudek D.M."/>
            <person name="Brandon R.C."/>
            <person name="Fine L.D."/>
            <person name="Fritchman J.L."/>
            <person name="Fuhrmann J.L."/>
            <person name="Geoghagen N.S.M."/>
            <person name="Gnehm C.L."/>
            <person name="McDonald L.A."/>
            <person name="Small K.V."/>
            <person name="Fraser C.M."/>
            <person name="Smith H.O."/>
            <person name="Venter J.C."/>
        </authorList>
    </citation>
    <scope>NUCLEOTIDE SEQUENCE [LARGE SCALE GENOMIC DNA]</scope>
    <source>
        <strain>ATCC 51907 / DSM 11121 / KW20 / Rd</strain>
    </source>
</reference>
<organism>
    <name type="scientific">Haemophilus influenzae (strain ATCC 51907 / DSM 11121 / KW20 / Rd)</name>
    <dbReference type="NCBI Taxonomy" id="71421"/>
    <lineage>
        <taxon>Bacteria</taxon>
        <taxon>Pseudomonadati</taxon>
        <taxon>Pseudomonadota</taxon>
        <taxon>Gammaproteobacteria</taxon>
        <taxon>Pasteurellales</taxon>
        <taxon>Pasteurellaceae</taxon>
        <taxon>Haemophilus</taxon>
    </lineage>
</organism>
<name>Y042_HAEIN</name>
<accession>P43930</accession>
<proteinExistence type="inferred from homology"/>
<evidence type="ECO:0000250" key="1"/>
<evidence type="ECO:0000305" key="2"/>
<keyword id="KW-0413">Isomerase</keyword>
<keyword id="KW-1185">Reference proteome</keyword>
<dbReference type="EC" id="5.4.99.-"/>
<dbReference type="EMBL" id="L42023">
    <property type="protein sequence ID" value="AAC21720.1"/>
    <property type="molecule type" value="Genomic_DNA"/>
</dbReference>
<dbReference type="PIR" id="B64000">
    <property type="entry name" value="B64000"/>
</dbReference>
<dbReference type="RefSeq" id="NP_438215.1">
    <property type="nucleotide sequence ID" value="NC_000907.1"/>
</dbReference>
<dbReference type="SMR" id="P43930"/>
<dbReference type="STRING" id="71421.HI_0042"/>
<dbReference type="EnsemblBacteria" id="AAC21720">
    <property type="protein sequence ID" value="AAC21720"/>
    <property type="gene ID" value="HI_0042"/>
</dbReference>
<dbReference type="KEGG" id="hin:HI_0042"/>
<dbReference type="PATRIC" id="fig|71421.8.peg.42"/>
<dbReference type="eggNOG" id="COG0564">
    <property type="taxonomic scope" value="Bacteria"/>
</dbReference>
<dbReference type="HOGENOM" id="CLU_016902_6_0_6"/>
<dbReference type="OrthoDB" id="9807829at2"/>
<dbReference type="PhylomeDB" id="P43930"/>
<dbReference type="BioCyc" id="HINF71421:G1GJ1-42-MONOMER"/>
<dbReference type="Proteomes" id="UP000000579">
    <property type="component" value="Chromosome"/>
</dbReference>
<dbReference type="GO" id="GO:0140098">
    <property type="term" value="F:catalytic activity, acting on RNA"/>
    <property type="evidence" value="ECO:0007669"/>
    <property type="project" value="UniProtKB-ARBA"/>
</dbReference>
<dbReference type="GO" id="GO:0009982">
    <property type="term" value="F:pseudouridine synthase activity"/>
    <property type="evidence" value="ECO:0000318"/>
    <property type="project" value="GO_Central"/>
</dbReference>
<dbReference type="GO" id="GO:0003723">
    <property type="term" value="F:RNA binding"/>
    <property type="evidence" value="ECO:0007669"/>
    <property type="project" value="InterPro"/>
</dbReference>
<dbReference type="GO" id="GO:0000455">
    <property type="term" value="P:enzyme-directed rRNA pseudouridine synthesis"/>
    <property type="evidence" value="ECO:0000318"/>
    <property type="project" value="GO_Central"/>
</dbReference>
<dbReference type="CDD" id="cd02869">
    <property type="entry name" value="PseudoU_synth_RluA_like"/>
    <property type="match status" value="1"/>
</dbReference>
<dbReference type="Gene3D" id="3.30.2350.10">
    <property type="entry name" value="Pseudouridine synthase"/>
    <property type="match status" value="1"/>
</dbReference>
<dbReference type="InterPro" id="IPR020103">
    <property type="entry name" value="PsdUridine_synth_cat_dom_sf"/>
</dbReference>
<dbReference type="InterPro" id="IPR006508">
    <property type="entry name" value="PsdUridine_synth_RluA-like"/>
</dbReference>
<dbReference type="InterPro" id="IPR006224">
    <property type="entry name" value="PsdUridine_synth_RluA-like_CS"/>
</dbReference>
<dbReference type="InterPro" id="IPR006145">
    <property type="entry name" value="PsdUridine_synth_RsuA/RluA"/>
</dbReference>
<dbReference type="InterPro" id="IPR050188">
    <property type="entry name" value="RluA_PseudoU_synthase"/>
</dbReference>
<dbReference type="NCBIfam" id="TIGR01621">
    <property type="entry name" value="RluA-like"/>
    <property type="match status" value="1"/>
</dbReference>
<dbReference type="PANTHER" id="PTHR21600">
    <property type="entry name" value="MITOCHONDRIAL RNA PSEUDOURIDINE SYNTHASE"/>
    <property type="match status" value="1"/>
</dbReference>
<dbReference type="PANTHER" id="PTHR21600:SF87">
    <property type="entry name" value="RNA PSEUDOURIDYLATE SYNTHASE DOMAIN-CONTAINING PROTEIN 1"/>
    <property type="match status" value="1"/>
</dbReference>
<dbReference type="Pfam" id="PF00849">
    <property type="entry name" value="PseudoU_synth_2"/>
    <property type="match status" value="1"/>
</dbReference>
<dbReference type="SUPFAM" id="SSF55120">
    <property type="entry name" value="Pseudouridine synthase"/>
    <property type="match status" value="1"/>
</dbReference>
<dbReference type="PROSITE" id="PS01129">
    <property type="entry name" value="PSI_RLU"/>
    <property type="match status" value="1"/>
</dbReference>
<feature type="chain" id="PRO_0000162726" description="Uncharacterized RNA pseudouridine synthase HI_0042">
    <location>
        <begin position="1"/>
        <end position="224"/>
    </location>
</feature>
<feature type="active site" evidence="1">
    <location>
        <position position="52"/>
    </location>
</feature>
<comment type="catalytic activity">
    <reaction>
        <text>a uridine in RNA = a pseudouridine in RNA</text>
        <dbReference type="Rhea" id="RHEA:48348"/>
        <dbReference type="Rhea" id="RHEA-COMP:12068"/>
        <dbReference type="Rhea" id="RHEA-COMP:12069"/>
        <dbReference type="ChEBI" id="CHEBI:65314"/>
        <dbReference type="ChEBI" id="CHEBI:65315"/>
    </reaction>
</comment>
<comment type="similarity">
    <text evidence="2">Belongs to the pseudouridine synthase RluA family.</text>
</comment>
<gene>
    <name type="ordered locus">HI_0042</name>
</gene>
<sequence length="224" mass="25526">MEIEVVYQHSDFIIINKSEGISVHKDQEEQGLTELVAKQLNVPKVWLVHRLDKVTSGLLILALNAESAAEFSRLFSEHKIHKTYLALSNQKPKKKQGLIIGDMKKAREGAWKLCQTKDNPAITRFESVSCEPNLRLFILKPQTGKTHQLRVAMKSLGSPILGDGLYGKNTEKIDRTYLHATQLEFDYLNNFISVTCLPSQGQFWIKPTVFEQIQVYLTKPFLSK</sequence>
<protein>
    <recommendedName>
        <fullName>Uncharacterized RNA pseudouridine synthase HI_0042</fullName>
        <ecNumber>5.4.99.-</ecNumber>
    </recommendedName>
    <alternativeName>
        <fullName>RNA pseudouridylate synthase</fullName>
    </alternativeName>
    <alternativeName>
        <fullName>RNA-uridine isomerase</fullName>
    </alternativeName>
</protein>